<proteinExistence type="inferred from homology"/>
<organism>
    <name type="scientific">Salinispora tropica (strain ATCC BAA-916 / DSM 44818 / JCM 13857 / NBRC 105044 / CNB-440)</name>
    <dbReference type="NCBI Taxonomy" id="369723"/>
    <lineage>
        <taxon>Bacteria</taxon>
        <taxon>Bacillati</taxon>
        <taxon>Actinomycetota</taxon>
        <taxon>Actinomycetes</taxon>
        <taxon>Micromonosporales</taxon>
        <taxon>Micromonosporaceae</taxon>
        <taxon>Salinispora</taxon>
    </lineage>
</organism>
<gene>
    <name evidence="1" type="primary">ispE</name>
    <name type="ordered locus">Strop_0783</name>
</gene>
<dbReference type="EC" id="2.7.1.148" evidence="1"/>
<dbReference type="EMBL" id="CP000667">
    <property type="protein sequence ID" value="ABP53260.1"/>
    <property type="molecule type" value="Genomic_DNA"/>
</dbReference>
<dbReference type="RefSeq" id="WP_011904694.1">
    <property type="nucleotide sequence ID" value="NC_009380.1"/>
</dbReference>
<dbReference type="SMR" id="A4X310"/>
<dbReference type="STRING" id="369723.Strop_0783"/>
<dbReference type="KEGG" id="stp:Strop_0783"/>
<dbReference type="PATRIC" id="fig|369723.5.peg.794"/>
<dbReference type="eggNOG" id="COG1947">
    <property type="taxonomic scope" value="Bacteria"/>
</dbReference>
<dbReference type="HOGENOM" id="CLU_053057_1_1_11"/>
<dbReference type="UniPathway" id="UPA00056">
    <property type="reaction ID" value="UER00094"/>
</dbReference>
<dbReference type="Proteomes" id="UP000000235">
    <property type="component" value="Chromosome"/>
</dbReference>
<dbReference type="GO" id="GO:0050515">
    <property type="term" value="F:4-(cytidine 5'-diphospho)-2-C-methyl-D-erythritol kinase activity"/>
    <property type="evidence" value="ECO:0007669"/>
    <property type="project" value="UniProtKB-UniRule"/>
</dbReference>
<dbReference type="GO" id="GO:0005524">
    <property type="term" value="F:ATP binding"/>
    <property type="evidence" value="ECO:0007669"/>
    <property type="project" value="UniProtKB-UniRule"/>
</dbReference>
<dbReference type="GO" id="GO:0019288">
    <property type="term" value="P:isopentenyl diphosphate biosynthetic process, methylerythritol 4-phosphate pathway"/>
    <property type="evidence" value="ECO:0007669"/>
    <property type="project" value="UniProtKB-UniRule"/>
</dbReference>
<dbReference type="GO" id="GO:0016114">
    <property type="term" value="P:terpenoid biosynthetic process"/>
    <property type="evidence" value="ECO:0007669"/>
    <property type="project" value="InterPro"/>
</dbReference>
<dbReference type="Gene3D" id="3.30.230.10">
    <property type="match status" value="1"/>
</dbReference>
<dbReference type="Gene3D" id="3.30.70.890">
    <property type="entry name" value="GHMP kinase, C-terminal domain"/>
    <property type="match status" value="1"/>
</dbReference>
<dbReference type="HAMAP" id="MF_00061">
    <property type="entry name" value="IspE"/>
    <property type="match status" value="1"/>
</dbReference>
<dbReference type="InterPro" id="IPR013750">
    <property type="entry name" value="GHMP_kinase_C_dom"/>
</dbReference>
<dbReference type="InterPro" id="IPR036554">
    <property type="entry name" value="GHMP_kinase_C_sf"/>
</dbReference>
<dbReference type="InterPro" id="IPR006204">
    <property type="entry name" value="GHMP_kinase_N_dom"/>
</dbReference>
<dbReference type="InterPro" id="IPR004424">
    <property type="entry name" value="IspE"/>
</dbReference>
<dbReference type="InterPro" id="IPR020568">
    <property type="entry name" value="Ribosomal_Su5_D2-typ_SF"/>
</dbReference>
<dbReference type="InterPro" id="IPR014721">
    <property type="entry name" value="Ribsml_uS5_D2-typ_fold_subgr"/>
</dbReference>
<dbReference type="NCBIfam" id="TIGR00154">
    <property type="entry name" value="ispE"/>
    <property type="match status" value="1"/>
</dbReference>
<dbReference type="NCBIfam" id="NF002870">
    <property type="entry name" value="PRK03188.1"/>
    <property type="match status" value="1"/>
</dbReference>
<dbReference type="PANTHER" id="PTHR43527">
    <property type="entry name" value="4-DIPHOSPHOCYTIDYL-2-C-METHYL-D-ERYTHRITOL KINASE, CHLOROPLASTIC"/>
    <property type="match status" value="1"/>
</dbReference>
<dbReference type="PANTHER" id="PTHR43527:SF2">
    <property type="entry name" value="4-DIPHOSPHOCYTIDYL-2-C-METHYL-D-ERYTHRITOL KINASE, CHLOROPLASTIC"/>
    <property type="match status" value="1"/>
</dbReference>
<dbReference type="Pfam" id="PF08544">
    <property type="entry name" value="GHMP_kinases_C"/>
    <property type="match status" value="1"/>
</dbReference>
<dbReference type="Pfam" id="PF00288">
    <property type="entry name" value="GHMP_kinases_N"/>
    <property type="match status" value="1"/>
</dbReference>
<dbReference type="PIRSF" id="PIRSF010376">
    <property type="entry name" value="IspE"/>
    <property type="match status" value="1"/>
</dbReference>
<dbReference type="SUPFAM" id="SSF55060">
    <property type="entry name" value="GHMP Kinase, C-terminal domain"/>
    <property type="match status" value="1"/>
</dbReference>
<dbReference type="SUPFAM" id="SSF54211">
    <property type="entry name" value="Ribosomal protein S5 domain 2-like"/>
    <property type="match status" value="1"/>
</dbReference>
<feature type="chain" id="PRO_0000335754" description="4-diphosphocytidyl-2-C-methyl-D-erythritol kinase">
    <location>
        <begin position="1"/>
        <end position="315"/>
    </location>
</feature>
<feature type="active site" evidence="1">
    <location>
        <position position="26"/>
    </location>
</feature>
<feature type="active site" evidence="1">
    <location>
        <position position="153"/>
    </location>
</feature>
<feature type="binding site" evidence="1">
    <location>
        <begin position="111"/>
        <end position="121"/>
    </location>
    <ligand>
        <name>ATP</name>
        <dbReference type="ChEBI" id="CHEBI:30616"/>
    </ligand>
</feature>
<comment type="function">
    <text evidence="1">Catalyzes the phosphorylation of the position 2 hydroxy group of 4-diphosphocytidyl-2C-methyl-D-erythritol.</text>
</comment>
<comment type="catalytic activity">
    <reaction evidence="1">
        <text>4-CDP-2-C-methyl-D-erythritol + ATP = 4-CDP-2-C-methyl-D-erythritol 2-phosphate + ADP + H(+)</text>
        <dbReference type="Rhea" id="RHEA:18437"/>
        <dbReference type="ChEBI" id="CHEBI:15378"/>
        <dbReference type="ChEBI" id="CHEBI:30616"/>
        <dbReference type="ChEBI" id="CHEBI:57823"/>
        <dbReference type="ChEBI" id="CHEBI:57919"/>
        <dbReference type="ChEBI" id="CHEBI:456216"/>
        <dbReference type="EC" id="2.7.1.148"/>
    </reaction>
</comment>
<comment type="pathway">
    <text evidence="1">Isoprenoid biosynthesis; isopentenyl diphosphate biosynthesis via DXP pathway; isopentenyl diphosphate from 1-deoxy-D-xylulose 5-phosphate: step 3/6.</text>
</comment>
<comment type="similarity">
    <text evidence="1">Belongs to the GHMP kinase family. IspE subfamily.</text>
</comment>
<sequence length="315" mass="31943">MTEAWRPEDDEPRGASGPVRVRVPAKINLHLGVGPLRRDGYHELNTVYHAISIHDELTARRGDTLTLTMEGEGAGELALDESNLVIRAARALAGSTGVPPHARLHLRKQIPLAGGLAGGSADAAAALVACDALWGTGLTRDELAEIAAGLGSDVPFLIHGGTALGTGRGEAVSPVLARPTVWHWVVAVADGGLSTPVAYRELDRLRAAGAAGPPLGSTDTLLAALRQPDPRVLAAALGNDLQDAALALRPALAATLKAGEAAGALAGIVSGSGPTCVFLAAGAADAERIAAELSALDVCRQARTAHGPVAGARIG</sequence>
<evidence type="ECO:0000255" key="1">
    <source>
        <dbReference type="HAMAP-Rule" id="MF_00061"/>
    </source>
</evidence>
<name>ISPE_SALTO</name>
<keyword id="KW-0067">ATP-binding</keyword>
<keyword id="KW-0414">Isoprene biosynthesis</keyword>
<keyword id="KW-0418">Kinase</keyword>
<keyword id="KW-0547">Nucleotide-binding</keyword>
<keyword id="KW-1185">Reference proteome</keyword>
<keyword id="KW-0808">Transferase</keyword>
<accession>A4X310</accession>
<reference key="1">
    <citation type="journal article" date="2007" name="Proc. Natl. Acad. Sci. U.S.A.">
        <title>Genome sequencing reveals complex secondary metabolome in the marine actinomycete Salinispora tropica.</title>
        <authorList>
            <person name="Udwary D.W."/>
            <person name="Zeigler L."/>
            <person name="Asolkar R.N."/>
            <person name="Singan V."/>
            <person name="Lapidus A."/>
            <person name="Fenical W."/>
            <person name="Jensen P.R."/>
            <person name="Moore B.S."/>
        </authorList>
    </citation>
    <scope>NUCLEOTIDE SEQUENCE [LARGE SCALE GENOMIC DNA]</scope>
    <source>
        <strain>ATCC BAA-916 / DSM 44818 / JCM 13857 / NBRC 105044 / CNB-440</strain>
    </source>
</reference>
<protein>
    <recommendedName>
        <fullName evidence="1">4-diphosphocytidyl-2-C-methyl-D-erythritol kinase</fullName>
        <shortName evidence="1">CMK</shortName>
        <ecNumber evidence="1">2.7.1.148</ecNumber>
    </recommendedName>
    <alternativeName>
        <fullName evidence="1">4-(cytidine-5'-diphospho)-2-C-methyl-D-erythritol kinase</fullName>
    </alternativeName>
</protein>